<gene>
    <name type="primary">sox18-b</name>
    <name type="synonym">sox18</name>
</gene>
<proteinExistence type="evidence at protein level"/>
<comment type="function">
    <text evidence="6 7">Transcription factor. Binds to the consensus DNA sequence 5'-AACAAT-3'. Also binds 5'-CACAAT-3' and 5'-AATAAT-3' but with a lower affinity. Acts partially redundantly with sox7 during cardiogenesis, acting indirectly through nodal-signaling to induce mesodermal, organizer and endodermal tissues, which then interact to initiate cardiogenesis. Also acts as an antagonist of beta-catenin signaling.</text>
</comment>
<comment type="subcellular location">
    <subcellularLocation>
        <location evidence="3">Nucleus</location>
    </subcellularLocation>
</comment>
<comment type="tissue specificity">
    <text evidence="6 7">Expressed in the adult spleen, lung, heart and kidney, and at a lower level in the adult testis, liver and brain.</text>
</comment>
<comment type="developmental stage">
    <text evidence="6">Expressed zygotically in both embryos and adults. Embryonic expression initiates during gastrulation, is down-regulated between stages 15 and 23, and is then elevated up to stage 41.</text>
</comment>
<comment type="domain">
    <text evidence="2">Binds target DNA via the HMG box domain.</text>
</comment>
<comment type="domain">
    <text evidence="1">The 9aaTAD motif is a transactivation domain present in a large number of yeast and animal transcription factors.</text>
</comment>
<organism>
    <name type="scientific">Xenopus laevis</name>
    <name type="common">African clawed frog</name>
    <dbReference type="NCBI Taxonomy" id="8355"/>
    <lineage>
        <taxon>Eukaryota</taxon>
        <taxon>Metazoa</taxon>
        <taxon>Chordata</taxon>
        <taxon>Craniata</taxon>
        <taxon>Vertebrata</taxon>
        <taxon>Euteleostomi</taxon>
        <taxon>Amphibia</taxon>
        <taxon>Batrachia</taxon>
        <taxon>Anura</taxon>
        <taxon>Pipoidea</taxon>
        <taxon>Pipidae</taxon>
        <taxon>Xenopodinae</taxon>
        <taxon>Xenopus</taxon>
        <taxon>Xenopus</taxon>
    </lineage>
</organism>
<feature type="chain" id="PRO_0000375979" description="Transcription factor Sox-18B">
    <location>
        <begin position="1"/>
        <end position="361"/>
    </location>
</feature>
<feature type="domain" description="Sox C-terminal" evidence="4">
    <location>
        <begin position="234"/>
        <end position="360"/>
    </location>
</feature>
<feature type="DNA-binding region" description="HMG box" evidence="3">
    <location>
        <begin position="66"/>
        <end position="134"/>
    </location>
</feature>
<feature type="region of interest" description="Disordered" evidence="5">
    <location>
        <begin position="17"/>
        <end position="65"/>
    </location>
</feature>
<feature type="region of interest" description="Interaction with DNA" evidence="2">
    <location>
        <begin position="68"/>
        <end position="81"/>
    </location>
</feature>
<feature type="region of interest" description="Interaction with DNA" evidence="2">
    <location>
        <begin position="92"/>
        <end position="104"/>
    </location>
</feature>
<feature type="region of interest" description="Disordered" evidence="5">
    <location>
        <begin position="127"/>
        <end position="163"/>
    </location>
</feature>
<feature type="region of interest" description="Important for transcriptional activation" evidence="2">
    <location>
        <begin position="147"/>
        <end position="208"/>
    </location>
</feature>
<feature type="short sequence motif" description="9aaTAD" evidence="1">
    <location>
        <begin position="306"/>
        <end position="314"/>
    </location>
</feature>
<feature type="compositionally biased region" description="Pro residues" evidence="5">
    <location>
        <begin position="36"/>
        <end position="49"/>
    </location>
</feature>
<feature type="compositionally biased region" description="Basic residues" evidence="5">
    <location>
        <begin position="133"/>
        <end position="147"/>
    </location>
</feature>
<feature type="compositionally biased region" description="Basic and acidic residues" evidence="5">
    <location>
        <begin position="148"/>
        <end position="157"/>
    </location>
</feature>
<reference evidence="9 11" key="1">
    <citation type="journal article" date="2002" name="Gene">
        <title>Expression and characterization of Xenopus laevis SRY-related cDNAs, xSox17alpha1, xSox17alpha2, xSox18alpha and xSox18beta.</title>
        <authorList>
            <person name="Hasegawa M."/>
            <person name="Hiraoka Y."/>
            <person name="Hagiuda J."/>
            <person name="Ogawa M."/>
            <person name="Aiso S."/>
        </authorList>
    </citation>
    <scope>NUCLEOTIDE SEQUENCE [MRNA]</scope>
    <scope>DNA-BINDING</scope>
    <scope>TISSUE SPECIFICITY</scope>
    <scope>DEVELOPMENTAL STAGE</scope>
</reference>
<reference evidence="10" key="2">
    <citation type="submission" date="2004-06" db="EMBL/GenBank/DDBJ databases">
        <authorList>
            <consortium name="NIH - Xenopus Gene Collection (XGC) project"/>
        </authorList>
    </citation>
    <scope>NUCLEOTIDE SEQUENCE [LARGE SCALE MRNA]</scope>
    <source>
        <tissue evidence="10">Spleen</tissue>
    </source>
</reference>
<reference evidence="9" key="3">
    <citation type="journal article" date="2005" name="Dev. Dyn.">
        <title>SOX7 and SOX18 are essential for cardiogenesis in Xenopus.</title>
        <authorList>
            <person name="Zhang C."/>
            <person name="Basta T."/>
            <person name="Klymkowsky M.W."/>
        </authorList>
    </citation>
    <scope>FUNCTION</scope>
    <scope>TISSUE SPECIFICITY</scope>
</reference>
<name>SX18B_XENLA</name>
<evidence type="ECO:0000250" key="1">
    <source>
        <dbReference type="UniProtKB" id="P35713"/>
    </source>
</evidence>
<evidence type="ECO:0000250" key="2">
    <source>
        <dbReference type="UniProtKB" id="P43680"/>
    </source>
</evidence>
<evidence type="ECO:0000255" key="3">
    <source>
        <dbReference type="PROSITE-ProRule" id="PRU00267"/>
    </source>
</evidence>
<evidence type="ECO:0000255" key="4">
    <source>
        <dbReference type="PROSITE-ProRule" id="PRU00849"/>
    </source>
</evidence>
<evidence type="ECO:0000256" key="5">
    <source>
        <dbReference type="SAM" id="MobiDB-lite"/>
    </source>
</evidence>
<evidence type="ECO:0000269" key="6">
    <source>
    </source>
</evidence>
<evidence type="ECO:0000269" key="7">
    <source>
    </source>
</evidence>
<evidence type="ECO:0000303" key="8">
    <source>
    </source>
</evidence>
<evidence type="ECO:0000305" key="9"/>
<evidence type="ECO:0000312" key="10">
    <source>
        <dbReference type="EMBL" id="AAH72123.1"/>
    </source>
</evidence>
<evidence type="ECO:0000312" key="11">
    <source>
        <dbReference type="EMBL" id="BAB60830.1"/>
    </source>
</evidence>
<accession>Q90ZH7</accession>
<keyword id="KW-0217">Developmental protein</keyword>
<keyword id="KW-0238">DNA-binding</keyword>
<keyword id="KW-0539">Nucleus</keyword>
<keyword id="KW-1185">Reference proteome</keyword>
<keyword id="KW-0804">Transcription</keyword>
<keyword id="KW-0805">Transcription regulation</keyword>
<sequence>MHRSSYCREETTLCQGVNSTWVPPADTVPEASLTPHSPPAPDSPAPSPKPGYGYSACEEKPGDPRIRRPMNAFMVWAKDERKRLAQQNPDLHNAVLSKMLGQSWKNLTSAEKRPFVEEAERLRVQHLQDHPNYKYRPRRKKQAKKLKRMDPSHHLRNEGYTGGQPMVNLSHFRELHPLGGSGELESYGLPTPEMSPLDVLEPSEPAFFPPHMREDPDPGLFRTYQHEMDFSQEKTLREISLPYSTSPSHMGSFLRTPTPSAFYYKPHGGSSARTPLGQLSPPPEAPALDAMDHLNHAELWGDFDLNEFDQYLNMSRTQGPGYSFPMSKLGGPRTIPCEENSLISALSDASTAMYYTPCITG</sequence>
<protein>
    <recommendedName>
        <fullName>Transcription factor Sox-18B</fullName>
        <shortName evidence="8">xSox18beta</shortName>
    </recommendedName>
    <alternativeName>
        <fullName>SRY (sex determining region Y)-box 18B</fullName>
    </alternativeName>
</protein>
<dbReference type="EMBL" id="AB052693">
    <property type="protein sequence ID" value="BAB60830.1"/>
    <property type="molecule type" value="mRNA"/>
</dbReference>
<dbReference type="EMBL" id="BC072123">
    <property type="protein sequence ID" value="AAH72123.1"/>
    <property type="molecule type" value="mRNA"/>
</dbReference>
<dbReference type="RefSeq" id="NP_001082104.1">
    <property type="nucleotide sequence ID" value="NM_001088635.1"/>
</dbReference>
<dbReference type="SMR" id="Q90ZH7"/>
<dbReference type="DNASU" id="398227"/>
<dbReference type="GeneID" id="398227"/>
<dbReference type="KEGG" id="xla:398227"/>
<dbReference type="AGR" id="Xenbase:XB-GENE-6251810"/>
<dbReference type="CTD" id="398227"/>
<dbReference type="Xenbase" id="XB-GENE-6251810">
    <property type="gene designation" value="sox18.S"/>
</dbReference>
<dbReference type="OMA" id="MANLSHF"/>
<dbReference type="OrthoDB" id="1919336at2759"/>
<dbReference type="Proteomes" id="UP000186698">
    <property type="component" value="Chromosome 9_10S"/>
</dbReference>
<dbReference type="Bgee" id="398227">
    <property type="expression patterns" value="Expressed in lung and 15 other cell types or tissues"/>
</dbReference>
<dbReference type="GO" id="GO:0005634">
    <property type="term" value="C:nucleus"/>
    <property type="evidence" value="ECO:0000250"/>
    <property type="project" value="UniProtKB"/>
</dbReference>
<dbReference type="GO" id="GO:0001228">
    <property type="term" value="F:DNA-binding transcription activator activity, RNA polymerase II-specific"/>
    <property type="evidence" value="ECO:0000318"/>
    <property type="project" value="GO_Central"/>
</dbReference>
<dbReference type="GO" id="GO:0000978">
    <property type="term" value="F:RNA polymerase II cis-regulatory region sequence-specific DNA binding"/>
    <property type="evidence" value="ECO:0000318"/>
    <property type="project" value="GO_Central"/>
</dbReference>
<dbReference type="GO" id="GO:0043565">
    <property type="term" value="F:sequence-specific DNA binding"/>
    <property type="evidence" value="ECO:0000314"/>
    <property type="project" value="UniProtKB"/>
</dbReference>
<dbReference type="GO" id="GO:0001525">
    <property type="term" value="P:angiogenesis"/>
    <property type="evidence" value="ECO:0000318"/>
    <property type="project" value="GO_Central"/>
</dbReference>
<dbReference type="GO" id="GO:0007507">
    <property type="term" value="P:heart development"/>
    <property type="evidence" value="ECO:0000315"/>
    <property type="project" value="UniProtKB"/>
</dbReference>
<dbReference type="GO" id="GO:0001946">
    <property type="term" value="P:lymphangiogenesis"/>
    <property type="evidence" value="ECO:0000318"/>
    <property type="project" value="GO_Central"/>
</dbReference>
<dbReference type="GO" id="GO:0030178">
    <property type="term" value="P:negative regulation of Wnt signaling pathway"/>
    <property type="evidence" value="ECO:0000315"/>
    <property type="project" value="UniProtKB"/>
</dbReference>
<dbReference type="GO" id="GO:0045944">
    <property type="term" value="P:positive regulation of transcription by RNA polymerase II"/>
    <property type="evidence" value="ECO:0000318"/>
    <property type="project" value="GO_Central"/>
</dbReference>
<dbReference type="GO" id="GO:0001570">
    <property type="term" value="P:vasculogenesis"/>
    <property type="evidence" value="ECO:0000318"/>
    <property type="project" value="GO_Central"/>
</dbReference>
<dbReference type="CDD" id="cd22048">
    <property type="entry name" value="HMG-box_SoxF_SOX18"/>
    <property type="match status" value="1"/>
</dbReference>
<dbReference type="FunFam" id="1.10.30.10:FF:000008">
    <property type="entry name" value="transcription factor SOX-7"/>
    <property type="match status" value="1"/>
</dbReference>
<dbReference type="Gene3D" id="1.10.30.10">
    <property type="entry name" value="High mobility group box domain"/>
    <property type="match status" value="1"/>
</dbReference>
<dbReference type="InterPro" id="IPR009071">
    <property type="entry name" value="HMG_box_dom"/>
</dbReference>
<dbReference type="InterPro" id="IPR036910">
    <property type="entry name" value="HMG_box_dom_sf"/>
</dbReference>
<dbReference type="InterPro" id="IPR033392">
    <property type="entry name" value="Sox7/17/18_central"/>
</dbReference>
<dbReference type="InterPro" id="IPR021934">
    <property type="entry name" value="Sox_C"/>
</dbReference>
<dbReference type="InterPro" id="IPR050140">
    <property type="entry name" value="SRY-related_HMG-box_TF-like"/>
</dbReference>
<dbReference type="PANTHER" id="PTHR10270">
    <property type="entry name" value="SOX TRANSCRIPTION FACTOR"/>
    <property type="match status" value="1"/>
</dbReference>
<dbReference type="PANTHER" id="PTHR10270:SF204">
    <property type="entry name" value="TRANSCRIPTION FACTOR SOX-18"/>
    <property type="match status" value="1"/>
</dbReference>
<dbReference type="Pfam" id="PF00505">
    <property type="entry name" value="HMG_box"/>
    <property type="match status" value="1"/>
</dbReference>
<dbReference type="Pfam" id="PF12067">
    <property type="entry name" value="Sox17_18_mid"/>
    <property type="match status" value="1"/>
</dbReference>
<dbReference type="SMART" id="SM00398">
    <property type="entry name" value="HMG"/>
    <property type="match status" value="1"/>
</dbReference>
<dbReference type="SUPFAM" id="SSF47095">
    <property type="entry name" value="HMG-box"/>
    <property type="match status" value="1"/>
</dbReference>
<dbReference type="PROSITE" id="PS50118">
    <property type="entry name" value="HMG_BOX_2"/>
    <property type="match status" value="1"/>
</dbReference>
<dbReference type="PROSITE" id="PS51516">
    <property type="entry name" value="SOX_C"/>
    <property type="match status" value="1"/>
</dbReference>